<evidence type="ECO:0000250" key="1"/>
<evidence type="ECO:0000255" key="2"/>
<evidence type="ECO:0000305" key="3"/>
<comment type="function">
    <text evidence="1">May block potassium channels.</text>
</comment>
<comment type="subcellular location">
    <subcellularLocation>
        <location evidence="1">Secreted</location>
    </subcellularLocation>
</comment>
<comment type="tissue specificity">
    <text>Expressed by the venom gland.</text>
</comment>
<comment type="domain">
    <text evidence="3">Has the structural arrangement of an alpha-helix connected to antiparallel beta-sheets by disulfide bonds (CS-alpha/beta).</text>
</comment>
<comment type="similarity">
    <text evidence="3">Belongs to the short scorpion toxin superfamily. Potassium channel inhibitor family. Alpha-KTx 23 subfamily.</text>
</comment>
<comment type="caution">
    <text evidence="3">Has been classified as a the potassium channel toxin alpha-KTx 22.7 in PubMed:22230549. Since the subfamily 22 has already been attributed, this peptide should be reclassified as alpha-KTx 23.7.</text>
</comment>
<accession>B8XH47</accession>
<reference key="1">
    <citation type="submission" date="2008-10" db="EMBL/GenBank/DDBJ databases">
        <title>Buthus occitanus israelis scorpion toxin.</title>
        <authorList>
            <person name="Zilberberg N."/>
            <person name="Kozminsky-Atias A."/>
        </authorList>
    </citation>
    <scope>NUCLEOTIDE SEQUENCE [MRNA]</scope>
</reference>
<reference key="2">
    <citation type="journal article" date="2012" name="Peptides">
        <title>Identification and molecular characterization of three new K(+)-channel specific toxins from the Chinese scorpion Mesobuthus martensii Karsch revealing intronic number polymorphism and alternative splicing in duplicated genes.</title>
        <authorList>
            <person name="Zeng X.C."/>
            <person name="Zhang L."/>
            <person name="Nie Y."/>
            <person name="Luo X."/>
        </authorList>
    </citation>
    <scope>NOMENCLATURE</scope>
</reference>
<name>KA23M_BUTIS</name>
<feature type="signal peptide" evidence="2">
    <location>
        <begin position="1"/>
        <end position="18"/>
    </location>
</feature>
<feature type="chain" id="PRO_0000417442" description="Potassium channel toxin alpha-KTx Tx790">
    <location>
        <begin position="19"/>
        <end position="62"/>
    </location>
</feature>
<feature type="disulfide bond" evidence="2">
    <location>
        <begin position="28"/>
        <end position="46"/>
    </location>
</feature>
<feature type="disulfide bond" evidence="2">
    <location>
        <begin position="33"/>
        <end position="59"/>
    </location>
</feature>
<feature type="disulfide bond" evidence="2">
    <location>
        <begin position="37"/>
        <end position="61"/>
    </location>
</feature>
<sequence>MQKLFIVLVLFCILRLDAEVDGLTVSLCNQSECQEKCKKENKNGKCIQEIELNWVYNICKCF</sequence>
<proteinExistence type="evidence at transcript level"/>
<organism>
    <name type="scientific">Buthus israelis</name>
    <name type="common">Israeli scorpion</name>
    <name type="synonym">Buthus occitanus israelis</name>
    <dbReference type="NCBI Taxonomy" id="2899555"/>
    <lineage>
        <taxon>Eukaryota</taxon>
        <taxon>Metazoa</taxon>
        <taxon>Ecdysozoa</taxon>
        <taxon>Arthropoda</taxon>
        <taxon>Chelicerata</taxon>
        <taxon>Arachnida</taxon>
        <taxon>Scorpiones</taxon>
        <taxon>Buthida</taxon>
        <taxon>Buthoidea</taxon>
        <taxon>Buthidae</taxon>
        <taxon>Buthus</taxon>
    </lineage>
</organism>
<keyword id="KW-1015">Disulfide bond</keyword>
<keyword id="KW-0872">Ion channel impairing toxin</keyword>
<keyword id="KW-0528">Neurotoxin</keyword>
<keyword id="KW-0632">Potassium channel impairing toxin</keyword>
<keyword id="KW-0964">Secreted</keyword>
<keyword id="KW-0732">Signal</keyword>
<keyword id="KW-0800">Toxin</keyword>
<dbReference type="EMBL" id="FJ360836">
    <property type="protein sequence ID" value="ACJ23156.1"/>
    <property type="molecule type" value="mRNA"/>
</dbReference>
<dbReference type="SMR" id="B8XH47"/>
<dbReference type="GO" id="GO:0005576">
    <property type="term" value="C:extracellular region"/>
    <property type="evidence" value="ECO:0007669"/>
    <property type="project" value="UniProtKB-SubCell"/>
</dbReference>
<dbReference type="GO" id="GO:0015459">
    <property type="term" value="F:potassium channel regulator activity"/>
    <property type="evidence" value="ECO:0007669"/>
    <property type="project" value="UniProtKB-KW"/>
</dbReference>
<dbReference type="GO" id="GO:0090729">
    <property type="term" value="F:toxin activity"/>
    <property type="evidence" value="ECO:0007669"/>
    <property type="project" value="UniProtKB-KW"/>
</dbReference>
<protein>
    <recommendedName>
        <fullName>Potassium channel toxin alpha-KTx Tx790</fullName>
    </recommendedName>
</protein>